<accession>A4VN38</accession>
<organism>
    <name type="scientific">Stutzerimonas stutzeri (strain A1501)</name>
    <name type="common">Pseudomonas stutzeri</name>
    <dbReference type="NCBI Taxonomy" id="379731"/>
    <lineage>
        <taxon>Bacteria</taxon>
        <taxon>Pseudomonadati</taxon>
        <taxon>Pseudomonadota</taxon>
        <taxon>Gammaproteobacteria</taxon>
        <taxon>Pseudomonadales</taxon>
        <taxon>Pseudomonadaceae</taxon>
        <taxon>Stutzerimonas</taxon>
    </lineage>
</organism>
<protein>
    <recommendedName>
        <fullName evidence="1">Ribosomal RNA small subunit methyltransferase J</fullName>
        <ecNumber evidence="1">2.1.1.242</ecNumber>
    </recommendedName>
    <alternativeName>
        <fullName evidence="1">16S rRNA m2G1516 methyltransferase</fullName>
    </alternativeName>
    <alternativeName>
        <fullName evidence="1">rRNA (guanine-N(2)-)-methyltransferase</fullName>
    </alternativeName>
</protein>
<dbReference type="EC" id="2.1.1.242" evidence="1"/>
<dbReference type="EMBL" id="CP000304">
    <property type="protein sequence ID" value="ABP80389.1"/>
    <property type="molecule type" value="Genomic_DNA"/>
</dbReference>
<dbReference type="RefSeq" id="WP_011913846.1">
    <property type="nucleotide sequence ID" value="NC_009434.1"/>
</dbReference>
<dbReference type="SMR" id="A4VN38"/>
<dbReference type="KEGG" id="psa:PST_2739"/>
<dbReference type="eggNOG" id="COG0742">
    <property type="taxonomic scope" value="Bacteria"/>
</dbReference>
<dbReference type="HOGENOM" id="CLU_076324_0_1_6"/>
<dbReference type="Proteomes" id="UP000000233">
    <property type="component" value="Chromosome"/>
</dbReference>
<dbReference type="GO" id="GO:0005737">
    <property type="term" value="C:cytoplasm"/>
    <property type="evidence" value="ECO:0007669"/>
    <property type="project" value="UniProtKB-SubCell"/>
</dbReference>
<dbReference type="GO" id="GO:0008990">
    <property type="term" value="F:rRNA (guanine-N2-)-methyltransferase activity"/>
    <property type="evidence" value="ECO:0007669"/>
    <property type="project" value="UniProtKB-UniRule"/>
</dbReference>
<dbReference type="CDD" id="cd02440">
    <property type="entry name" value="AdoMet_MTases"/>
    <property type="match status" value="1"/>
</dbReference>
<dbReference type="Gene3D" id="3.40.50.150">
    <property type="entry name" value="Vaccinia Virus protein VP39"/>
    <property type="match status" value="1"/>
</dbReference>
<dbReference type="HAMAP" id="MF_01523">
    <property type="entry name" value="16SrRNA_methyltr_J"/>
    <property type="match status" value="1"/>
</dbReference>
<dbReference type="InterPro" id="IPR007536">
    <property type="entry name" value="16SrRNA_methylTrfase_J"/>
</dbReference>
<dbReference type="InterPro" id="IPR029063">
    <property type="entry name" value="SAM-dependent_MTases_sf"/>
</dbReference>
<dbReference type="PANTHER" id="PTHR36112">
    <property type="entry name" value="RIBOSOMAL RNA SMALL SUBUNIT METHYLTRANSFERASE J"/>
    <property type="match status" value="1"/>
</dbReference>
<dbReference type="PANTHER" id="PTHR36112:SF1">
    <property type="entry name" value="RIBOSOMAL RNA SMALL SUBUNIT METHYLTRANSFERASE J"/>
    <property type="match status" value="1"/>
</dbReference>
<dbReference type="Pfam" id="PF04445">
    <property type="entry name" value="SAM_MT"/>
    <property type="match status" value="1"/>
</dbReference>
<dbReference type="SUPFAM" id="SSF53335">
    <property type="entry name" value="S-adenosyl-L-methionine-dependent methyltransferases"/>
    <property type="match status" value="1"/>
</dbReference>
<gene>
    <name evidence="1" type="primary">rsmJ</name>
    <name type="ordered locus">PST_2739</name>
</gene>
<feature type="chain" id="PRO_0000296967" description="Ribosomal RNA small subunit methyltransferase J">
    <location>
        <begin position="1"/>
        <end position="258"/>
    </location>
</feature>
<feature type="binding site" evidence="1">
    <location>
        <begin position="107"/>
        <end position="108"/>
    </location>
    <ligand>
        <name>S-adenosyl-L-methionine</name>
        <dbReference type="ChEBI" id="CHEBI:59789"/>
    </ligand>
</feature>
<feature type="binding site" evidence="1">
    <location>
        <begin position="123"/>
        <end position="124"/>
    </location>
    <ligand>
        <name>S-adenosyl-L-methionine</name>
        <dbReference type="ChEBI" id="CHEBI:59789"/>
    </ligand>
</feature>
<feature type="binding site" evidence="1">
    <location>
        <position position="177"/>
    </location>
    <ligand>
        <name>S-adenosyl-L-methionine</name>
        <dbReference type="ChEBI" id="CHEBI:59789"/>
    </ligand>
</feature>
<comment type="function">
    <text evidence="1">Specifically methylates the guanosine in position 1516 of 16S rRNA.</text>
</comment>
<comment type="catalytic activity">
    <reaction evidence="1">
        <text>guanosine(1516) in 16S rRNA + S-adenosyl-L-methionine = N(2)-methylguanosine(1516) in 16S rRNA + S-adenosyl-L-homocysteine + H(+)</text>
        <dbReference type="Rhea" id="RHEA:43220"/>
        <dbReference type="Rhea" id="RHEA-COMP:10412"/>
        <dbReference type="Rhea" id="RHEA-COMP:10413"/>
        <dbReference type="ChEBI" id="CHEBI:15378"/>
        <dbReference type="ChEBI" id="CHEBI:57856"/>
        <dbReference type="ChEBI" id="CHEBI:59789"/>
        <dbReference type="ChEBI" id="CHEBI:74269"/>
        <dbReference type="ChEBI" id="CHEBI:74481"/>
        <dbReference type="EC" id="2.1.1.242"/>
    </reaction>
</comment>
<comment type="subcellular location">
    <subcellularLocation>
        <location evidence="1">Cytoplasm</location>
    </subcellularLocation>
</comment>
<comment type="similarity">
    <text evidence="1">Belongs to the methyltransferase superfamily. RsmJ family.</text>
</comment>
<sequence>MSASNSLVRVEPLAPSFAAVAGQWAQRLGLPQELAEAEFALQVGEAGLQLQLLEAQAPGPVRVDFVEGAAAHRRQFGGGSGQMIAKAVGIQPGIRPRVLDATAGLGRDAFVLATLGCEVSLIERQPLIAALLDDGLSRAAADADVAAIAARMRLLEGNAIELMQHWRGEPPQVIYLDPMFPHRDKSALVKKEMRLFRPFVGDDLDAPALLSAALELASHRVVVKRPRKAPAIDGSKPGYSLEGKSSRYDIYPKKKLQA</sequence>
<reference key="1">
    <citation type="journal article" date="2008" name="Proc. Natl. Acad. Sci. U.S.A.">
        <title>Nitrogen fixation island and rhizosphere competence traits in the genome of root-associated Pseudomonas stutzeri A1501.</title>
        <authorList>
            <person name="Yan Y."/>
            <person name="Yang J."/>
            <person name="Dou Y."/>
            <person name="Chen M."/>
            <person name="Ping S."/>
            <person name="Peng J."/>
            <person name="Lu W."/>
            <person name="Zhang W."/>
            <person name="Yao Z."/>
            <person name="Li H."/>
            <person name="Liu W."/>
            <person name="He S."/>
            <person name="Geng L."/>
            <person name="Zhang X."/>
            <person name="Yang F."/>
            <person name="Yu H."/>
            <person name="Zhan Y."/>
            <person name="Li D."/>
            <person name="Lin Z."/>
            <person name="Wang Y."/>
            <person name="Elmerich C."/>
            <person name="Lin M."/>
            <person name="Jin Q."/>
        </authorList>
    </citation>
    <scope>NUCLEOTIDE SEQUENCE [LARGE SCALE GENOMIC DNA]</scope>
    <source>
        <strain>A1501</strain>
    </source>
</reference>
<proteinExistence type="inferred from homology"/>
<keyword id="KW-0963">Cytoplasm</keyword>
<keyword id="KW-0489">Methyltransferase</keyword>
<keyword id="KW-1185">Reference proteome</keyword>
<keyword id="KW-0698">rRNA processing</keyword>
<keyword id="KW-0949">S-adenosyl-L-methionine</keyword>
<keyword id="KW-0808">Transferase</keyword>
<evidence type="ECO:0000255" key="1">
    <source>
        <dbReference type="HAMAP-Rule" id="MF_01523"/>
    </source>
</evidence>
<name>RSMJ_STUS1</name>